<sequence>MFLATLYFALPLLDLLMSAEVSGGDRLDCVKASDQCLKEQSCSTKYRTLRQCVAGKETNFSLTSGLEAKDECRSAMEALKQKSLYNCRCKRGMKKEKNCLRIYWSMYQSLQGNDLLEDSPYEPVNSRLSDIFRAVPFISDVFQQVEHISKGNNCLDAAKACNLDDTCKKYRSAYITPCTTSMSNEVCNRRKCHKALRQFFDKVPAKHSYGMLFCSCRDIACTERRRQTIVPVCSYEERERPNCLSLQDSCKTNYICRSRLADFFTNCQPESRSVSNCLKENYADCLLAYSGLIGTVMTPNYVDSSSLSVAPWCDCSNSGNDLEDCLKFLNFFKDNTCLKNAIQAFGNGSDVTMWQPAPPVQTTTATTTTAFRVKNKPLGPAGSENEIPTHVLPPCANLQAQKLKSNVSGSTHLCLSDSDFGKDGLAGASSHITTKSMAAPPSCSLSSLPVLMLTALAALLSVSLAETS</sequence>
<feature type="signal peptide" evidence="2">
    <location>
        <begin position="1"/>
        <end position="24"/>
    </location>
</feature>
<feature type="chain" id="PRO_0000010781" description="GDNF family receptor alpha-1">
    <location>
        <begin position="25"/>
        <end position="430"/>
    </location>
</feature>
<feature type="propeptide" id="PRO_0000010782" description="Removed in mature form" evidence="2">
    <location>
        <begin position="431"/>
        <end position="468"/>
    </location>
</feature>
<feature type="repeat" description="1">
    <location>
        <begin position="25"/>
        <end position="113"/>
    </location>
</feature>
<feature type="repeat" description="2">
    <location>
        <begin position="150"/>
        <end position="238"/>
    </location>
</feature>
<feature type="repeat" description="3">
    <location>
        <begin position="239"/>
        <end position="342"/>
    </location>
</feature>
<feature type="lipid moiety-binding region" description="GPI-anchor amidated serine" evidence="2">
    <location>
        <position position="430"/>
    </location>
</feature>
<feature type="glycosylation site" description="N-linked (GlcNAc...) asparagine" evidence="2">
    <location>
        <position position="59"/>
    </location>
</feature>
<feature type="glycosylation site" description="N-linked (GlcNAc...) asparagine" evidence="2">
    <location>
        <position position="347"/>
    </location>
</feature>
<feature type="glycosylation site" description="N-linked (GlcNAc...) asparagine" evidence="2">
    <location>
        <position position="406"/>
    </location>
</feature>
<feature type="disulfide bond" evidence="6 10">
    <location>
        <begin position="36"/>
        <end position="42"/>
    </location>
</feature>
<feature type="disulfide bond" evidence="6 10">
    <location>
        <begin position="154"/>
        <end position="214"/>
    </location>
</feature>
<feature type="disulfide bond" evidence="6 10">
    <location>
        <begin position="161"/>
        <end position="167"/>
    </location>
</feature>
<feature type="disulfide bond" evidence="6 10">
    <location>
        <begin position="178"/>
        <end position="192"/>
    </location>
</feature>
<feature type="disulfide bond" evidence="6 10">
    <location>
        <begin position="187"/>
        <end position="233"/>
    </location>
</feature>
<feature type="disulfide bond" evidence="6 10">
    <location>
        <begin position="216"/>
        <end position="221"/>
    </location>
</feature>
<feature type="disulfide bond" evidence="4 6 10">
    <location>
        <begin position="243"/>
        <end position="313"/>
    </location>
</feature>
<feature type="disulfide bond" evidence="4 6 9 10">
    <location>
        <begin position="250"/>
        <end position="256"/>
    </location>
</feature>
<feature type="disulfide bond" evidence="4 6 9 10">
    <location>
        <begin position="267"/>
        <end position="285"/>
    </location>
</feature>
<feature type="disulfide bond" evidence="4 6 9 10">
    <location>
        <begin position="277"/>
        <end position="337"/>
    </location>
</feature>
<feature type="disulfide bond" evidence="4 6 9 10">
    <location>
        <begin position="315"/>
        <end position="325"/>
    </location>
</feature>
<feature type="helix" evidence="12">
    <location>
        <begin position="153"/>
        <end position="162"/>
    </location>
</feature>
<feature type="helix" evidence="12">
    <location>
        <begin position="165"/>
        <end position="179"/>
    </location>
</feature>
<feature type="strand" evidence="12">
    <location>
        <begin position="185"/>
        <end position="187"/>
    </location>
</feature>
<feature type="helix" evidence="12">
    <location>
        <begin position="189"/>
        <end position="202"/>
    </location>
</feature>
<feature type="helix" evidence="12">
    <location>
        <begin position="205"/>
        <end position="213"/>
    </location>
</feature>
<feature type="helix" evidence="12">
    <location>
        <begin position="219"/>
        <end position="226"/>
    </location>
</feature>
<feature type="turn" evidence="12">
    <location>
        <begin position="227"/>
        <end position="229"/>
    </location>
</feature>
<feature type="helix" evidence="12">
    <location>
        <begin position="231"/>
        <end position="234"/>
    </location>
</feature>
<feature type="helix" evidence="11">
    <location>
        <begin position="243"/>
        <end position="251"/>
    </location>
</feature>
<feature type="helix" evidence="11">
    <location>
        <begin position="254"/>
        <end position="266"/>
    </location>
</feature>
<feature type="strand" evidence="11">
    <location>
        <begin position="270"/>
        <end position="273"/>
    </location>
</feature>
<feature type="helix" evidence="11">
    <location>
        <begin position="279"/>
        <end position="281"/>
    </location>
</feature>
<feature type="helix" evidence="11">
    <location>
        <begin position="282"/>
        <end position="290"/>
    </location>
</feature>
<feature type="turn" evidence="11">
    <location>
        <begin position="291"/>
        <end position="294"/>
    </location>
</feature>
<feature type="strand" evidence="12">
    <location>
        <begin position="299"/>
        <end position="301"/>
    </location>
</feature>
<feature type="strand" evidence="13">
    <location>
        <begin position="304"/>
        <end position="306"/>
    </location>
</feature>
<feature type="strand" evidence="12">
    <location>
        <begin position="309"/>
        <end position="312"/>
    </location>
</feature>
<feature type="helix" evidence="11">
    <location>
        <begin position="319"/>
        <end position="321"/>
    </location>
</feature>
<feature type="helix" evidence="11">
    <location>
        <begin position="322"/>
        <end position="333"/>
    </location>
</feature>
<feature type="helix" evidence="11">
    <location>
        <begin position="336"/>
        <end position="345"/>
    </location>
</feature>
<accession>Q62997</accession>
<gene>
    <name type="primary">Gfra1</name>
    <name type="synonym">Gdnfra</name>
    <name type="synonym">Retl1</name>
    <name type="synonym">Trnr1</name>
</gene>
<organism>
    <name type="scientific">Rattus norvegicus</name>
    <name type="common">Rat</name>
    <dbReference type="NCBI Taxonomy" id="10116"/>
    <lineage>
        <taxon>Eukaryota</taxon>
        <taxon>Metazoa</taxon>
        <taxon>Chordata</taxon>
        <taxon>Craniata</taxon>
        <taxon>Vertebrata</taxon>
        <taxon>Euteleostomi</taxon>
        <taxon>Mammalia</taxon>
        <taxon>Eutheria</taxon>
        <taxon>Euarchontoglires</taxon>
        <taxon>Glires</taxon>
        <taxon>Rodentia</taxon>
        <taxon>Myomorpha</taxon>
        <taxon>Muroidea</taxon>
        <taxon>Muridae</taxon>
        <taxon>Murinae</taxon>
        <taxon>Rattus</taxon>
    </lineage>
</organism>
<protein>
    <recommendedName>
        <fullName>GDNF family receptor alpha-1</fullName>
        <shortName>GDNF receptor alpha-1</shortName>
        <shortName>GDNFR-alpha-1</shortName>
        <shortName>GFR-alpha-1</shortName>
    </recommendedName>
    <alternativeName>
        <fullName>RET ligand 1</fullName>
    </alternativeName>
    <alternativeName>
        <fullName>TGF-beta-related neurotrophic factor receptor 1</fullName>
    </alternativeName>
</protein>
<dbReference type="EMBL" id="U59486">
    <property type="protein sequence ID" value="AAC52663.1"/>
    <property type="molecule type" value="mRNA"/>
</dbReference>
<dbReference type="EMBL" id="U97142">
    <property type="protein sequence ID" value="AAC53300.1"/>
    <property type="molecule type" value="mRNA"/>
</dbReference>
<dbReference type="RefSeq" id="NP_037091.1">
    <property type="nucleotide sequence ID" value="NM_012959.2"/>
</dbReference>
<dbReference type="RefSeq" id="XP_008758734.1">
    <property type="nucleotide sequence ID" value="XM_008760512.4"/>
</dbReference>
<dbReference type="RefSeq" id="XP_038957687.1">
    <property type="nucleotide sequence ID" value="XM_039101759.2"/>
</dbReference>
<dbReference type="RefSeq" id="XP_038957690.1">
    <property type="nucleotide sequence ID" value="XM_039101762.2"/>
</dbReference>
<dbReference type="RefSeq" id="XP_038957696.1">
    <property type="nucleotide sequence ID" value="XM_039101768.2"/>
</dbReference>
<dbReference type="PDB" id="1Q8D">
    <property type="method" value="X-ray"/>
    <property type="resolution" value="1.80 A"/>
    <property type="chains" value="A=239-346"/>
</dbReference>
<dbReference type="PDB" id="2V5E">
    <property type="method" value="X-ray"/>
    <property type="resolution" value="2.35 A"/>
    <property type="chains" value="A=150-349"/>
</dbReference>
<dbReference type="PDB" id="3FUB">
    <property type="method" value="X-ray"/>
    <property type="resolution" value="2.35 A"/>
    <property type="chains" value="A/C=145-425"/>
</dbReference>
<dbReference type="PDB" id="4UX8">
    <property type="method" value="EM"/>
    <property type="resolution" value="24.00 A"/>
    <property type="chains" value="C/E=1-468"/>
</dbReference>
<dbReference type="PDBsum" id="1Q8D"/>
<dbReference type="PDBsum" id="2V5E"/>
<dbReference type="PDBsum" id="3FUB"/>
<dbReference type="PDBsum" id="4UX8"/>
<dbReference type="EMDB" id="EMD-2712"/>
<dbReference type="SMR" id="Q62997"/>
<dbReference type="BioGRID" id="247488">
    <property type="interactions" value="2"/>
</dbReference>
<dbReference type="FunCoup" id="Q62997">
    <property type="interactions" value="143"/>
</dbReference>
<dbReference type="IntAct" id="Q62997">
    <property type="interactions" value="3"/>
</dbReference>
<dbReference type="STRING" id="10116.ENSRNOP00000023667"/>
<dbReference type="GlyCosmos" id="Q62997">
    <property type="glycosylation" value="3 sites, No reported glycans"/>
</dbReference>
<dbReference type="GlyGen" id="Q62997">
    <property type="glycosylation" value="3 sites"/>
</dbReference>
<dbReference type="PhosphoSitePlus" id="Q62997"/>
<dbReference type="PaxDb" id="10116-ENSRNOP00000023667"/>
<dbReference type="Ensembl" id="ENSRNOT00000119102.1">
    <property type="protein sequence ID" value="ENSRNOP00000091664.1"/>
    <property type="gene ID" value="ENSRNOG00000017438.8"/>
</dbReference>
<dbReference type="GeneID" id="25454"/>
<dbReference type="KEGG" id="rno:25454"/>
<dbReference type="AGR" id="RGD:2681"/>
<dbReference type="CTD" id="2674"/>
<dbReference type="RGD" id="2681">
    <property type="gene designation" value="Gfra1"/>
</dbReference>
<dbReference type="eggNOG" id="ENOG502QQA2">
    <property type="taxonomic scope" value="Eukaryota"/>
</dbReference>
<dbReference type="GeneTree" id="ENSGT00940000155560"/>
<dbReference type="InParanoid" id="Q62997"/>
<dbReference type="OMA" id="CKKFLNF"/>
<dbReference type="OrthoDB" id="9435188at2759"/>
<dbReference type="PhylomeDB" id="Q62997"/>
<dbReference type="TreeFam" id="TF331647"/>
<dbReference type="Reactome" id="R-RNO-5673001">
    <property type="pathway name" value="RAF/MAP kinase cascade"/>
</dbReference>
<dbReference type="Reactome" id="R-RNO-8853659">
    <property type="pathway name" value="RET signaling"/>
</dbReference>
<dbReference type="EvolutionaryTrace" id="Q62997"/>
<dbReference type="PRO" id="PR:Q62997"/>
<dbReference type="Proteomes" id="UP000002494">
    <property type="component" value="Chromosome 1"/>
</dbReference>
<dbReference type="GO" id="GO:0030424">
    <property type="term" value="C:axon"/>
    <property type="evidence" value="ECO:0000314"/>
    <property type="project" value="RGD"/>
</dbReference>
<dbReference type="GO" id="GO:0009897">
    <property type="term" value="C:external side of plasma membrane"/>
    <property type="evidence" value="ECO:0000314"/>
    <property type="project" value="RGD"/>
</dbReference>
<dbReference type="GO" id="GO:0005615">
    <property type="term" value="C:extracellular space"/>
    <property type="evidence" value="ECO:0000314"/>
    <property type="project" value="RGD"/>
</dbReference>
<dbReference type="GO" id="GO:0005794">
    <property type="term" value="C:Golgi apparatus"/>
    <property type="evidence" value="ECO:0007669"/>
    <property type="project" value="UniProtKB-SubCell"/>
</dbReference>
<dbReference type="GO" id="GO:0005771">
    <property type="term" value="C:multivesicular body"/>
    <property type="evidence" value="ECO:0007669"/>
    <property type="project" value="UniProtKB-SubCell"/>
</dbReference>
<dbReference type="GO" id="GO:0043025">
    <property type="term" value="C:neuronal cell body"/>
    <property type="evidence" value="ECO:0000314"/>
    <property type="project" value="RGD"/>
</dbReference>
<dbReference type="GO" id="GO:0005886">
    <property type="term" value="C:plasma membrane"/>
    <property type="evidence" value="ECO:0000304"/>
    <property type="project" value="Reactome"/>
</dbReference>
<dbReference type="GO" id="GO:0098797">
    <property type="term" value="C:plasma membrane protein complex"/>
    <property type="evidence" value="ECO:0000314"/>
    <property type="project" value="CAFA"/>
</dbReference>
<dbReference type="GO" id="GO:0043235">
    <property type="term" value="C:receptor complex"/>
    <property type="evidence" value="ECO:0000314"/>
    <property type="project" value="RGD"/>
</dbReference>
<dbReference type="GO" id="GO:0016167">
    <property type="term" value="F:glial cell-derived neurotrophic factor receptor activity"/>
    <property type="evidence" value="ECO:0000314"/>
    <property type="project" value="UniProtKB"/>
</dbReference>
<dbReference type="GO" id="GO:0005178">
    <property type="term" value="F:integrin binding"/>
    <property type="evidence" value="ECO:0000353"/>
    <property type="project" value="RGD"/>
</dbReference>
<dbReference type="GO" id="GO:0005030">
    <property type="term" value="F:neurotrophin receptor activity"/>
    <property type="evidence" value="ECO:0000314"/>
    <property type="project" value="RGD"/>
</dbReference>
<dbReference type="GO" id="GO:0038023">
    <property type="term" value="F:signaling receptor activity"/>
    <property type="evidence" value="ECO:0000318"/>
    <property type="project" value="GO_Central"/>
</dbReference>
<dbReference type="GO" id="GO:0016477">
    <property type="term" value="P:cell migration"/>
    <property type="evidence" value="ECO:0000315"/>
    <property type="project" value="RGD"/>
</dbReference>
<dbReference type="GO" id="GO:0035860">
    <property type="term" value="P:glial cell-derived neurotrophic factor receptor signaling pathway"/>
    <property type="evidence" value="ECO:0000314"/>
    <property type="project" value="UniProtKB"/>
</dbReference>
<dbReference type="GO" id="GO:0001822">
    <property type="term" value="P:kidney development"/>
    <property type="evidence" value="ECO:0000270"/>
    <property type="project" value="RGD"/>
</dbReference>
<dbReference type="GO" id="GO:0008584">
    <property type="term" value="P:male gonad development"/>
    <property type="evidence" value="ECO:0000270"/>
    <property type="project" value="RGD"/>
</dbReference>
<dbReference type="GO" id="GO:0007399">
    <property type="term" value="P:nervous system development"/>
    <property type="evidence" value="ECO:0000266"/>
    <property type="project" value="RGD"/>
</dbReference>
<dbReference type="GO" id="GO:0030182">
    <property type="term" value="P:neuron differentiation"/>
    <property type="evidence" value="ECO:0000315"/>
    <property type="project" value="RGD"/>
</dbReference>
<dbReference type="GO" id="GO:0031175">
    <property type="term" value="P:neuron projection development"/>
    <property type="evidence" value="ECO:0000314"/>
    <property type="project" value="RGD"/>
</dbReference>
<dbReference type="GO" id="GO:0050731">
    <property type="term" value="P:positive regulation of peptidyl-tyrosine phosphorylation"/>
    <property type="evidence" value="ECO:0000314"/>
    <property type="project" value="CAFA"/>
</dbReference>
<dbReference type="FunFam" id="1.10.220.110:FF:000001">
    <property type="entry name" value="GDNF family receptor alpha"/>
    <property type="match status" value="1"/>
</dbReference>
<dbReference type="Gene3D" id="1.10.220.110">
    <property type="entry name" value="GDNF binding domain"/>
    <property type="match status" value="1"/>
</dbReference>
<dbReference type="InterPro" id="IPR016017">
    <property type="entry name" value="GDNF/GAS1"/>
</dbReference>
<dbReference type="InterPro" id="IPR037193">
    <property type="entry name" value="GDNF_alpha"/>
</dbReference>
<dbReference type="InterPro" id="IPR003438">
    <property type="entry name" value="GDNF_rcpt"/>
</dbReference>
<dbReference type="InterPro" id="IPR003503">
    <property type="entry name" value="GDNF_rcpt_A1"/>
</dbReference>
<dbReference type="InterPro" id="IPR017372">
    <property type="entry name" value="Glial_neurotroph_fac_rcpt_a1/2"/>
</dbReference>
<dbReference type="PANTHER" id="PTHR10269:SF3">
    <property type="entry name" value="GDNF FAMILY RECEPTOR ALPHA-1"/>
    <property type="match status" value="1"/>
</dbReference>
<dbReference type="PANTHER" id="PTHR10269">
    <property type="entry name" value="GDNF RECEPTOR ALPHA"/>
    <property type="match status" value="1"/>
</dbReference>
<dbReference type="Pfam" id="PF02351">
    <property type="entry name" value="GDNF"/>
    <property type="match status" value="3"/>
</dbReference>
<dbReference type="PIRSF" id="PIRSF038071">
    <property type="entry name" value="GDNF_family_receptor_alpha"/>
    <property type="match status" value="1"/>
</dbReference>
<dbReference type="PRINTS" id="PR01317">
    <property type="entry name" value="GDNFRALPHA1"/>
</dbReference>
<dbReference type="PRINTS" id="PR01316">
    <property type="entry name" value="GDNFRECEPTOR"/>
</dbReference>
<dbReference type="SMART" id="SM00907">
    <property type="entry name" value="GDNF"/>
    <property type="match status" value="3"/>
</dbReference>
<dbReference type="SUPFAM" id="SSF110035">
    <property type="entry name" value="GDNF receptor-like"/>
    <property type="match status" value="1"/>
</dbReference>
<name>GFRA1_RAT</name>
<evidence type="ECO:0000250" key="1">
    <source>
        <dbReference type="UniProtKB" id="P56159"/>
    </source>
</evidence>
<evidence type="ECO:0000255" key="2"/>
<evidence type="ECO:0000269" key="3">
    <source>
    </source>
</evidence>
<evidence type="ECO:0000269" key="4">
    <source>
    </source>
</evidence>
<evidence type="ECO:0000269" key="5">
    <source>
    </source>
</evidence>
<evidence type="ECO:0000269" key="6">
    <source>
    </source>
</evidence>
<evidence type="ECO:0000269" key="7">
    <source>
    </source>
</evidence>
<evidence type="ECO:0000305" key="8"/>
<evidence type="ECO:0007744" key="9">
    <source>
        <dbReference type="PDB" id="1Q8D"/>
    </source>
</evidence>
<evidence type="ECO:0007744" key="10">
    <source>
        <dbReference type="PDB" id="4UX8"/>
    </source>
</evidence>
<evidence type="ECO:0007829" key="11">
    <source>
        <dbReference type="PDB" id="1Q8D"/>
    </source>
</evidence>
<evidence type="ECO:0007829" key="12">
    <source>
        <dbReference type="PDB" id="2V5E"/>
    </source>
</evidence>
<evidence type="ECO:0007829" key="13">
    <source>
        <dbReference type="PDB" id="3FUB"/>
    </source>
</evidence>
<reference key="1">
    <citation type="journal article" date="1996" name="Cell">
        <title>GDNF-induced activation of the ret protein tyrosine kinase is mediated by GDNFR-alpha, a novel receptor for GDNF.</title>
        <authorList>
            <person name="Jing S."/>
            <person name="Wen D."/>
            <person name="Yu Y."/>
            <person name="Holst P.L."/>
            <person name="Luo Y."/>
            <person name="Fang M."/>
            <person name="Tamir R."/>
            <person name="Antonio L."/>
            <person name="Hu Z."/>
            <person name="Cupples R."/>
            <person name="Louis J.-C."/>
            <person name="Hu S."/>
            <person name="Altrock B.W."/>
            <person name="Fox G.M."/>
        </authorList>
    </citation>
    <scope>NUCLEOTIDE SEQUENCE [MRNA]</scope>
    <scope>FUNCTION</scope>
    <scope>SUBCELLULAR LOCATION</scope>
    <source>
        <tissue>Retina</tissue>
    </source>
</reference>
<reference key="2">
    <citation type="journal article" date="1997" name="Proc. Natl. Acad. Sci. U.S.A.">
        <title>Glial cell line-derived neurotrophic factor-dependent RET activation can be mediated by two different cell-surface accessory proteins.</title>
        <authorList>
            <person name="Sanicola M."/>
            <person name="Hession C.A."/>
            <person name="Worley D.S."/>
            <person name="Carmillo P."/>
            <person name="Ehrenfels C."/>
            <person name="Walus L."/>
            <person name="Robinson S."/>
            <person name="Jaworski G."/>
            <person name="Wei H."/>
            <person name="Tizard R."/>
            <person name="Whitty A."/>
            <person name="Pepinsky R.B."/>
            <person name="Cate R.L."/>
        </authorList>
    </citation>
    <scope>NUCLEOTIDE SEQUENCE [MRNA]</scope>
    <source>
        <strain>Wistar</strain>
        <tissue>Kidney</tissue>
    </source>
</reference>
<reference key="3">
    <citation type="journal article" date="1996" name="Nature">
        <title>Characterization of a multicomponent receptor for GDNF.</title>
        <authorList>
            <person name="Treanor J.J.S."/>
            <person name="Googman L."/>
            <person name="de Sauvage F."/>
            <person name="Stone D.M."/>
            <person name="Poulsen K.T."/>
            <person name="Beck C.D."/>
            <person name="Gray C."/>
            <person name="Armanini M.P."/>
            <person name="Pollock R.A."/>
            <person name="Hefti F."/>
            <person name="Phillips H.S."/>
            <person name="Goddard A."/>
            <person name="Moore M.W."/>
            <person name="Buj-Bello A."/>
            <person name="Davies A.M."/>
            <person name="Asai N."/>
            <person name="Takahashi M."/>
            <person name="Vandlen R."/>
            <person name="Henderson C.E."/>
            <person name="Rosenthal A."/>
        </authorList>
    </citation>
    <scope>NUCLEOTIDE SEQUENCE [MRNA]</scope>
</reference>
<reference key="4">
    <citation type="journal article" date="2000" name="Brain Res. Mol. Brain Res.">
        <title>Expression of the GDNF family members and their receptors in the mature rat cochlea.</title>
        <authorList>
            <person name="Stoever T."/>
            <person name="Gong T.-W.L."/>
            <person name="Cho Y."/>
            <person name="Altschuler R.A."/>
            <person name="Lomax M.I."/>
        </authorList>
    </citation>
    <scope>TISSUE SPECIFICITY</scope>
</reference>
<reference key="5">
    <citation type="journal article" date="2013" name="Cell Rep.">
        <title>SorLA controls neurotrophic activity by sorting of GDNF and its receptors GFRalpha1 and RET.</title>
        <authorList>
            <person name="Glerup S."/>
            <person name="Lume M."/>
            <person name="Olsen D."/>
            <person name="Nyengaard J.R."/>
            <person name="Vaegter C.B."/>
            <person name="Gustafsen C."/>
            <person name="Christensen E.I."/>
            <person name="Kjolby M."/>
            <person name="Hay-Schmidt A."/>
            <person name="Bender D."/>
            <person name="Madsen P."/>
            <person name="Saarma M."/>
            <person name="Nykjaer A."/>
            <person name="Petersen C.M."/>
        </authorList>
    </citation>
    <scope>INTERACTION WITH RET AND SORL1</scope>
    <scope>SUBCELLULAR LOCATION</scope>
</reference>
<reference key="6">
    <citation type="journal article" date="2004" name="EMBO J.">
        <title>The structure of GFRalpha1 domain 3 reveals new insights into GDNF binding and RET activation.</title>
        <authorList>
            <person name="Leppanen V.M."/>
            <person name="Bespalov M.M."/>
            <person name="Runeberg-Roos P."/>
            <person name="Puurand U."/>
            <person name="Merits A."/>
            <person name="Saarma M."/>
            <person name="Goldman A."/>
        </authorList>
    </citation>
    <scope>X-RAY CRYSTALLOGRAPHY (1.8 ANGSTROMS) OF 239-346</scope>
    <scope>DISULFIDE BONDS</scope>
</reference>
<reference evidence="10" key="7">
    <citation type="journal article" date="2014" name="Cell Rep.">
        <title>RET recognition of GDNF-GFRalpha1 ligand by a composite binding site promotes membrane-proximal self-association.</title>
        <authorList>
            <person name="Goodman K.M."/>
            <person name="Kjaer S."/>
            <person name="Beuron F."/>
            <person name="Knowles P.P."/>
            <person name="Nawrotek A."/>
            <person name="Burns E.M."/>
            <person name="Purkiss A.G."/>
            <person name="George R."/>
            <person name="Santoro M."/>
            <person name="Morris E.P."/>
            <person name="McDonald N.Q."/>
        </authorList>
    </citation>
    <scope>STRUCTURE BY ELECTRON MICROSCOPY (24.00 ANGSTROMS) IN COMPLEX WITH RET AND GDNF</scope>
    <scope>FUNCTION</scope>
    <scope>SUBUNIT</scope>
    <scope>DISULFIDE BONDS</scope>
</reference>
<keyword id="KW-0002">3D-structure</keyword>
<keyword id="KW-1003">Cell membrane</keyword>
<keyword id="KW-1015">Disulfide bond</keyword>
<keyword id="KW-0967">Endosome</keyword>
<keyword id="KW-0325">Glycoprotein</keyword>
<keyword id="KW-0333">Golgi apparatus</keyword>
<keyword id="KW-0336">GPI-anchor</keyword>
<keyword id="KW-0449">Lipoprotein</keyword>
<keyword id="KW-0472">Membrane</keyword>
<keyword id="KW-0675">Receptor</keyword>
<keyword id="KW-1185">Reference proteome</keyword>
<keyword id="KW-0677">Repeat</keyword>
<keyword id="KW-0732">Signal</keyword>
<proteinExistence type="evidence at protein level"/>
<comment type="function">
    <text evidence="6 7">Coreceptor for GDNF, a neurotrophic factor that enhances survival and morphological differentiation of dopaminergic neurons and increases their high-affinity dopamine uptake (PubMed:8674117). GDNF-binding leads to autophosphorylation and activation of the RET receptor (PubMed:25242331, PubMed:8674117).</text>
</comment>
<comment type="subunit">
    <text evidence="1 4 6">Interacts with GDNF ligand and RET: forms a 2:2:2 ternary complex composed of GDNF ligand, GFRA1 and RET receptor (PubMed:15044950, PubMed:25242331). Interacts with SORL1, either alone or in complex with GDNF (By similarity). Interaction between SORL1 and GFRA1 leads to GFRA1 internalization, but not degradation (By similarity).</text>
</comment>
<comment type="interaction">
    <interactant intactId="EBI-25397991">
        <id>Q62997</id>
    </interactant>
    <interactant intactId="EBI-1171329">
        <id>Q92673</id>
        <label>SORL1</label>
    </interactant>
    <organismsDiffer>true</organismsDiffer>
    <experiments>5</experiments>
</comment>
<comment type="subcellular location">
    <subcellularLocation>
        <location evidence="5">Cell membrane</location>
        <topology evidence="7">Lipid-anchor</topology>
        <topology evidence="7">GPI-anchor</topology>
    </subcellularLocation>
    <subcellularLocation>
        <location evidence="5">Golgi apparatus</location>
        <location evidence="5">trans-Golgi network</location>
    </subcellularLocation>
    <subcellularLocation>
        <location evidence="5">Endosome</location>
    </subcellularLocation>
    <subcellularLocation>
        <location evidence="5">Endosome</location>
        <location evidence="5">Multivesicular body</location>
    </subcellularLocation>
    <text evidence="5">Localizes mainly to the plasma membrane. In the presence of SORL1, shifts to vesicular structures, including trans-Golgi network, endosomes and multivesicular bodies.</text>
</comment>
<comment type="tissue specificity">
    <text evidence="3">Expressed in liver, brain, kidney and cochlea.</text>
</comment>
<comment type="similarity">
    <text evidence="8">Belongs to the GDNFR family.</text>
</comment>